<sequence length="89" mass="9896">MANTASARKRIRQNERRRERNVARMSRMRTFIKKVELAIQAGDKSAAAEAFKVAQPEMQRAAGKGVIAKNTISRKLSRLSARVKALATA</sequence>
<reference key="1">
    <citation type="journal article" date="2005" name="Nat. Biotechnol.">
        <title>Complete genome sequence of the acetic acid bacterium Gluconobacter oxydans.</title>
        <authorList>
            <person name="Prust C."/>
            <person name="Hoffmeister M."/>
            <person name="Liesegang H."/>
            <person name="Wiezer A."/>
            <person name="Fricke W.F."/>
            <person name="Ehrenreich A."/>
            <person name="Gottschalk G."/>
            <person name="Deppenmeier U."/>
        </authorList>
    </citation>
    <scope>NUCLEOTIDE SEQUENCE [LARGE SCALE GENOMIC DNA]</scope>
    <source>
        <strain>621H</strain>
    </source>
</reference>
<evidence type="ECO:0000255" key="1">
    <source>
        <dbReference type="HAMAP-Rule" id="MF_00500"/>
    </source>
</evidence>
<evidence type="ECO:0000256" key="2">
    <source>
        <dbReference type="SAM" id="MobiDB-lite"/>
    </source>
</evidence>
<evidence type="ECO:0000305" key="3"/>
<gene>
    <name evidence="1" type="primary">rpsT</name>
    <name type="ordered locus">GOX2501</name>
</gene>
<organism>
    <name type="scientific">Gluconobacter oxydans (strain 621H)</name>
    <name type="common">Gluconobacter suboxydans</name>
    <dbReference type="NCBI Taxonomy" id="290633"/>
    <lineage>
        <taxon>Bacteria</taxon>
        <taxon>Pseudomonadati</taxon>
        <taxon>Pseudomonadota</taxon>
        <taxon>Alphaproteobacteria</taxon>
        <taxon>Acetobacterales</taxon>
        <taxon>Acetobacteraceae</taxon>
        <taxon>Gluconobacter</taxon>
    </lineage>
</organism>
<dbReference type="EMBL" id="CP000009">
    <property type="protein sequence ID" value="AAW62231.1"/>
    <property type="molecule type" value="Genomic_DNA"/>
</dbReference>
<dbReference type="RefSeq" id="WP_011253998.1">
    <property type="nucleotide sequence ID" value="NZ_LT900338.1"/>
</dbReference>
<dbReference type="SMR" id="Q5FN16"/>
<dbReference type="STRING" id="290633.GOX2501"/>
<dbReference type="GeneID" id="56906760"/>
<dbReference type="KEGG" id="gox:GOX2501"/>
<dbReference type="eggNOG" id="COG0268">
    <property type="taxonomic scope" value="Bacteria"/>
</dbReference>
<dbReference type="HOGENOM" id="CLU_160655_4_0_5"/>
<dbReference type="Proteomes" id="UP000006375">
    <property type="component" value="Chromosome"/>
</dbReference>
<dbReference type="GO" id="GO:0015935">
    <property type="term" value="C:small ribosomal subunit"/>
    <property type="evidence" value="ECO:0007669"/>
    <property type="project" value="TreeGrafter"/>
</dbReference>
<dbReference type="GO" id="GO:0070181">
    <property type="term" value="F:small ribosomal subunit rRNA binding"/>
    <property type="evidence" value="ECO:0007669"/>
    <property type="project" value="TreeGrafter"/>
</dbReference>
<dbReference type="GO" id="GO:0003735">
    <property type="term" value="F:structural constituent of ribosome"/>
    <property type="evidence" value="ECO:0007669"/>
    <property type="project" value="InterPro"/>
</dbReference>
<dbReference type="GO" id="GO:0006412">
    <property type="term" value="P:translation"/>
    <property type="evidence" value="ECO:0007669"/>
    <property type="project" value="UniProtKB-UniRule"/>
</dbReference>
<dbReference type="FunFam" id="1.20.58.110:FF:000001">
    <property type="entry name" value="30S ribosomal protein S20"/>
    <property type="match status" value="1"/>
</dbReference>
<dbReference type="Gene3D" id="1.20.58.110">
    <property type="entry name" value="Ribosomal protein S20"/>
    <property type="match status" value="1"/>
</dbReference>
<dbReference type="HAMAP" id="MF_00500">
    <property type="entry name" value="Ribosomal_bS20"/>
    <property type="match status" value="1"/>
</dbReference>
<dbReference type="InterPro" id="IPR002583">
    <property type="entry name" value="Ribosomal_bS20"/>
</dbReference>
<dbReference type="InterPro" id="IPR036510">
    <property type="entry name" value="Ribosomal_bS20_sf"/>
</dbReference>
<dbReference type="NCBIfam" id="TIGR00029">
    <property type="entry name" value="S20"/>
    <property type="match status" value="1"/>
</dbReference>
<dbReference type="PANTHER" id="PTHR33398">
    <property type="entry name" value="30S RIBOSOMAL PROTEIN S20"/>
    <property type="match status" value="1"/>
</dbReference>
<dbReference type="PANTHER" id="PTHR33398:SF1">
    <property type="entry name" value="SMALL RIBOSOMAL SUBUNIT PROTEIN BS20C"/>
    <property type="match status" value="1"/>
</dbReference>
<dbReference type="Pfam" id="PF01649">
    <property type="entry name" value="Ribosomal_S20p"/>
    <property type="match status" value="1"/>
</dbReference>
<dbReference type="SUPFAM" id="SSF46992">
    <property type="entry name" value="Ribosomal protein S20"/>
    <property type="match status" value="1"/>
</dbReference>
<accession>Q5FN16</accession>
<name>RS20_GLUOX</name>
<proteinExistence type="inferred from homology"/>
<feature type="chain" id="PRO_0000167967" description="Small ribosomal subunit protein bS20">
    <location>
        <begin position="1"/>
        <end position="89"/>
    </location>
</feature>
<feature type="region of interest" description="Disordered" evidence="2">
    <location>
        <begin position="1"/>
        <end position="22"/>
    </location>
</feature>
<feature type="compositionally biased region" description="Basic and acidic residues" evidence="2">
    <location>
        <begin position="12"/>
        <end position="22"/>
    </location>
</feature>
<keyword id="KW-1185">Reference proteome</keyword>
<keyword id="KW-0687">Ribonucleoprotein</keyword>
<keyword id="KW-0689">Ribosomal protein</keyword>
<keyword id="KW-0694">RNA-binding</keyword>
<keyword id="KW-0699">rRNA-binding</keyword>
<comment type="function">
    <text evidence="1">Binds directly to 16S ribosomal RNA.</text>
</comment>
<comment type="similarity">
    <text evidence="1">Belongs to the bacterial ribosomal protein bS20 family.</text>
</comment>
<protein>
    <recommendedName>
        <fullName evidence="1">Small ribosomal subunit protein bS20</fullName>
    </recommendedName>
    <alternativeName>
        <fullName evidence="3">30S ribosomal protein S20</fullName>
    </alternativeName>
</protein>